<reference key="1">
    <citation type="journal article" date="2009" name="Genome Res.">
        <title>Genome structure of a Saccharomyces cerevisiae strain widely used in bioethanol production.</title>
        <authorList>
            <person name="Argueso J.L."/>
            <person name="Carazzolle M.F."/>
            <person name="Mieczkowski P.A."/>
            <person name="Duarte F.M."/>
            <person name="Netto O.V.C."/>
            <person name="Missawa S.K."/>
            <person name="Galzerani F."/>
            <person name="Costa G.G.L."/>
            <person name="Vidal R.O."/>
            <person name="Noronha M.F."/>
            <person name="Dominska M."/>
            <person name="Andrietta M.G.S."/>
            <person name="Andrietta S.R."/>
            <person name="Cunha A.F."/>
            <person name="Gomes L.H."/>
            <person name="Tavares F.C.A."/>
            <person name="Alcarde A.R."/>
            <person name="Dietrich F.S."/>
            <person name="McCusker J.H."/>
            <person name="Petes T.D."/>
            <person name="Pereira G.A.G."/>
        </authorList>
    </citation>
    <scope>NUCLEOTIDE SEQUENCE [LARGE SCALE GENOMIC DNA]</scope>
    <source>
        <strain>JAY291</strain>
    </source>
</reference>
<feature type="chain" id="PRO_0000409543" description="RNA annealing protein YRA2">
    <location>
        <begin position="1"/>
        <end position="203"/>
    </location>
</feature>
<feature type="domain" description="RRM" evidence="3">
    <location>
        <begin position="64"/>
        <end position="138"/>
    </location>
</feature>
<feature type="region of interest" description="Disordered" evidence="4">
    <location>
        <begin position="1"/>
        <end position="60"/>
    </location>
</feature>
<feature type="region of interest" description="Disordered" evidence="4">
    <location>
        <begin position="137"/>
        <end position="203"/>
    </location>
</feature>
<feature type="compositionally biased region" description="Polar residues" evidence="4">
    <location>
        <begin position="11"/>
        <end position="20"/>
    </location>
</feature>
<feature type="compositionally biased region" description="Basic and acidic residues" evidence="4">
    <location>
        <begin position="47"/>
        <end position="60"/>
    </location>
</feature>
<feature type="compositionally biased region" description="Basic residues" evidence="4">
    <location>
        <begin position="139"/>
        <end position="153"/>
    </location>
</feature>
<feature type="compositionally biased region" description="Basic residues" evidence="4">
    <location>
        <begin position="161"/>
        <end position="180"/>
    </location>
</feature>
<feature type="modified residue" description="N-acetylmethionine" evidence="2">
    <location>
        <position position="1"/>
    </location>
</feature>
<dbReference type="EMBL" id="ACFL01000006">
    <property type="protein sequence ID" value="EEU09186.1"/>
    <property type="molecule type" value="Genomic_DNA"/>
</dbReference>
<dbReference type="SMR" id="C7GIZ9"/>
<dbReference type="Proteomes" id="UP000008073">
    <property type="component" value="Unassembled WGS sequence"/>
</dbReference>
<dbReference type="GO" id="GO:0005634">
    <property type="term" value="C:nucleus"/>
    <property type="evidence" value="ECO:0007669"/>
    <property type="project" value="UniProtKB-SubCell"/>
</dbReference>
<dbReference type="GO" id="GO:0003677">
    <property type="term" value="F:DNA binding"/>
    <property type="evidence" value="ECO:0007669"/>
    <property type="project" value="UniProtKB-KW"/>
</dbReference>
<dbReference type="GO" id="GO:0003723">
    <property type="term" value="F:RNA binding"/>
    <property type="evidence" value="ECO:0007669"/>
    <property type="project" value="UniProtKB-KW"/>
</dbReference>
<dbReference type="GO" id="GO:0051028">
    <property type="term" value="P:mRNA transport"/>
    <property type="evidence" value="ECO:0007669"/>
    <property type="project" value="UniProtKB-KW"/>
</dbReference>
<dbReference type="CDD" id="cd12295">
    <property type="entry name" value="RRM_YRA2"/>
    <property type="match status" value="1"/>
</dbReference>
<dbReference type="FunFam" id="3.30.70.330:FF:000793">
    <property type="entry name" value="RNA annealing protein YRA2"/>
    <property type="match status" value="1"/>
</dbReference>
<dbReference type="Gene3D" id="3.30.70.330">
    <property type="match status" value="1"/>
</dbReference>
<dbReference type="InterPro" id="IPR025715">
    <property type="entry name" value="FoP_C"/>
</dbReference>
<dbReference type="InterPro" id="IPR012677">
    <property type="entry name" value="Nucleotide-bd_a/b_plait_sf"/>
</dbReference>
<dbReference type="InterPro" id="IPR035979">
    <property type="entry name" value="RBD_domain_sf"/>
</dbReference>
<dbReference type="InterPro" id="IPR000504">
    <property type="entry name" value="RRM_dom"/>
</dbReference>
<dbReference type="InterPro" id="IPR034396">
    <property type="entry name" value="Yra2_RRM"/>
</dbReference>
<dbReference type="Pfam" id="PF13865">
    <property type="entry name" value="FoP_duplication"/>
    <property type="match status" value="1"/>
</dbReference>
<dbReference type="Pfam" id="PF00076">
    <property type="entry name" value="RRM_1"/>
    <property type="match status" value="1"/>
</dbReference>
<dbReference type="SMART" id="SM00360">
    <property type="entry name" value="RRM"/>
    <property type="match status" value="1"/>
</dbReference>
<dbReference type="SUPFAM" id="SSF54928">
    <property type="entry name" value="RNA-binding domain, RBD"/>
    <property type="match status" value="1"/>
</dbReference>
<dbReference type="PROSITE" id="PS50102">
    <property type="entry name" value="RRM"/>
    <property type="match status" value="1"/>
</dbReference>
<name>YRA2_YEAS2</name>
<evidence type="ECO:0000250" key="1"/>
<evidence type="ECO:0000250" key="2">
    <source>
        <dbReference type="UniProtKB" id="P36036"/>
    </source>
</evidence>
<evidence type="ECO:0000255" key="3">
    <source>
        <dbReference type="PROSITE-ProRule" id="PRU00176"/>
    </source>
</evidence>
<evidence type="ECO:0000256" key="4">
    <source>
        <dbReference type="SAM" id="MobiDB-lite"/>
    </source>
</evidence>
<evidence type="ECO:0000305" key="5"/>
<protein>
    <recommendedName>
        <fullName>RNA annealing protein YRA2</fullName>
    </recommendedName>
</protein>
<gene>
    <name type="primary">YRA2</name>
    <name type="ORF">C1Q_00145</name>
</gene>
<accession>C7GIZ9</accession>
<comment type="function">
    <text evidence="1">Involved in export of poly(A) mRNAs from the nucleus. Recruited to the coding sequences as well as poly-A sites of active genes (By similarity).</text>
</comment>
<comment type="subunit">
    <text evidence="1">Associates with mRNPs. Interacts with YRA1.</text>
</comment>
<comment type="subcellular location">
    <subcellularLocation>
        <location evidence="1">Nucleus</location>
    </subcellularLocation>
</comment>
<comment type="similarity">
    <text evidence="5">Belongs to the YRA1 family.</text>
</comment>
<proteinExistence type="inferred from homology"/>
<keyword id="KW-0007">Acetylation</keyword>
<keyword id="KW-0238">DNA-binding</keyword>
<keyword id="KW-0509">mRNA transport</keyword>
<keyword id="KW-0539">Nucleus</keyword>
<keyword id="KW-0694">RNA-binding</keyword>
<keyword id="KW-0813">Transport</keyword>
<sequence>MDKAFDEIIGNSHTDSSSNHKVTRYRRRDLRNELGPRLGFAPSDAASRSKDRLYREREEPPLPKRIRISKIPLDVSDYTLDDMIKEFGSPIFSKIFDNKEDRTCIYEFEDPEVLEKIVERYNGHELHNAKIEVEIYQPQRKHSRMNAHNRRKQTAQEHGRGRPGSHYRQKPNRVSKKNKGREKNNTPTSVEALDAELDAYMKG</sequence>
<organism>
    <name type="scientific">Saccharomyces cerevisiae (strain JAY291)</name>
    <name type="common">Baker's yeast</name>
    <dbReference type="NCBI Taxonomy" id="574961"/>
    <lineage>
        <taxon>Eukaryota</taxon>
        <taxon>Fungi</taxon>
        <taxon>Dikarya</taxon>
        <taxon>Ascomycota</taxon>
        <taxon>Saccharomycotina</taxon>
        <taxon>Saccharomycetes</taxon>
        <taxon>Saccharomycetales</taxon>
        <taxon>Saccharomycetaceae</taxon>
        <taxon>Saccharomyces</taxon>
    </lineage>
</organism>